<keyword id="KW-0028">Amino-acid biosynthesis</keyword>
<keyword id="KW-0368">Histidine biosynthesis</keyword>
<keyword id="KW-0378">Hydrolase</keyword>
<keyword id="KW-0486">Methionine biosynthesis</keyword>
<keyword id="KW-0511">Multifunctional enzyme</keyword>
<keyword id="KW-0521">NADP</keyword>
<keyword id="KW-0554">One-carbon metabolism</keyword>
<keyword id="KW-0560">Oxidoreductase</keyword>
<keyword id="KW-0658">Purine biosynthesis</keyword>
<keyword id="KW-1185">Reference proteome</keyword>
<reference key="1">
    <citation type="submission" date="2006-08" db="EMBL/GenBank/DDBJ databases">
        <title>Complete sequence of Shewanella frigidimarina NCIMB 400.</title>
        <authorList>
            <consortium name="US DOE Joint Genome Institute"/>
            <person name="Copeland A."/>
            <person name="Lucas S."/>
            <person name="Lapidus A."/>
            <person name="Barry K."/>
            <person name="Detter J.C."/>
            <person name="Glavina del Rio T."/>
            <person name="Hammon N."/>
            <person name="Israni S."/>
            <person name="Dalin E."/>
            <person name="Tice H."/>
            <person name="Pitluck S."/>
            <person name="Fredrickson J.K."/>
            <person name="Kolker E."/>
            <person name="McCuel L.A."/>
            <person name="DiChristina T."/>
            <person name="Nealson K.H."/>
            <person name="Newman D."/>
            <person name="Tiedje J.M."/>
            <person name="Zhou J."/>
            <person name="Romine M.F."/>
            <person name="Culley D.E."/>
            <person name="Serres M."/>
            <person name="Chertkov O."/>
            <person name="Brettin T."/>
            <person name="Bruce D."/>
            <person name="Han C."/>
            <person name="Tapia R."/>
            <person name="Gilna P."/>
            <person name="Schmutz J."/>
            <person name="Larimer F."/>
            <person name="Land M."/>
            <person name="Hauser L."/>
            <person name="Kyrpides N."/>
            <person name="Mikhailova N."/>
            <person name="Richardson P."/>
        </authorList>
    </citation>
    <scope>NUCLEOTIDE SEQUENCE [LARGE SCALE GENOMIC DNA]</scope>
    <source>
        <strain>NCIMB 400</strain>
    </source>
</reference>
<dbReference type="EC" id="1.5.1.5" evidence="1"/>
<dbReference type="EC" id="3.5.4.9" evidence="1"/>
<dbReference type="EMBL" id="CP000447">
    <property type="protein sequence ID" value="ABI72439.1"/>
    <property type="molecule type" value="Genomic_DNA"/>
</dbReference>
<dbReference type="RefSeq" id="WP_011638048.1">
    <property type="nucleotide sequence ID" value="NC_008345.1"/>
</dbReference>
<dbReference type="SMR" id="Q07ZX6"/>
<dbReference type="STRING" id="318167.Sfri_2598"/>
<dbReference type="KEGG" id="sfr:Sfri_2598"/>
<dbReference type="eggNOG" id="COG0190">
    <property type="taxonomic scope" value="Bacteria"/>
</dbReference>
<dbReference type="HOGENOM" id="CLU_034045_2_1_6"/>
<dbReference type="OrthoDB" id="9803580at2"/>
<dbReference type="UniPathway" id="UPA00193"/>
<dbReference type="Proteomes" id="UP000000684">
    <property type="component" value="Chromosome"/>
</dbReference>
<dbReference type="GO" id="GO:0005829">
    <property type="term" value="C:cytosol"/>
    <property type="evidence" value="ECO:0007669"/>
    <property type="project" value="TreeGrafter"/>
</dbReference>
<dbReference type="GO" id="GO:0004477">
    <property type="term" value="F:methenyltetrahydrofolate cyclohydrolase activity"/>
    <property type="evidence" value="ECO:0007669"/>
    <property type="project" value="UniProtKB-UniRule"/>
</dbReference>
<dbReference type="GO" id="GO:0004488">
    <property type="term" value="F:methylenetetrahydrofolate dehydrogenase (NADP+) activity"/>
    <property type="evidence" value="ECO:0007669"/>
    <property type="project" value="UniProtKB-UniRule"/>
</dbReference>
<dbReference type="GO" id="GO:0000105">
    <property type="term" value="P:L-histidine biosynthetic process"/>
    <property type="evidence" value="ECO:0007669"/>
    <property type="project" value="UniProtKB-KW"/>
</dbReference>
<dbReference type="GO" id="GO:0009086">
    <property type="term" value="P:methionine biosynthetic process"/>
    <property type="evidence" value="ECO:0007669"/>
    <property type="project" value="UniProtKB-KW"/>
</dbReference>
<dbReference type="GO" id="GO:0006164">
    <property type="term" value="P:purine nucleotide biosynthetic process"/>
    <property type="evidence" value="ECO:0007669"/>
    <property type="project" value="UniProtKB-KW"/>
</dbReference>
<dbReference type="GO" id="GO:0035999">
    <property type="term" value="P:tetrahydrofolate interconversion"/>
    <property type="evidence" value="ECO:0007669"/>
    <property type="project" value="UniProtKB-UniRule"/>
</dbReference>
<dbReference type="CDD" id="cd01080">
    <property type="entry name" value="NAD_bind_m-THF_DH_Cyclohyd"/>
    <property type="match status" value="1"/>
</dbReference>
<dbReference type="FunFam" id="3.40.50.10860:FF:000001">
    <property type="entry name" value="Bifunctional protein FolD"/>
    <property type="match status" value="1"/>
</dbReference>
<dbReference type="FunFam" id="3.40.50.720:FF:000006">
    <property type="entry name" value="Bifunctional protein FolD"/>
    <property type="match status" value="1"/>
</dbReference>
<dbReference type="Gene3D" id="3.40.50.10860">
    <property type="entry name" value="Leucine Dehydrogenase, chain A, domain 1"/>
    <property type="match status" value="1"/>
</dbReference>
<dbReference type="Gene3D" id="3.40.50.720">
    <property type="entry name" value="NAD(P)-binding Rossmann-like Domain"/>
    <property type="match status" value="1"/>
</dbReference>
<dbReference type="HAMAP" id="MF_01576">
    <property type="entry name" value="THF_DHG_CYH"/>
    <property type="match status" value="1"/>
</dbReference>
<dbReference type="InterPro" id="IPR046346">
    <property type="entry name" value="Aminoacid_DH-like_N_sf"/>
</dbReference>
<dbReference type="InterPro" id="IPR036291">
    <property type="entry name" value="NAD(P)-bd_dom_sf"/>
</dbReference>
<dbReference type="InterPro" id="IPR000672">
    <property type="entry name" value="THF_DH/CycHdrlase"/>
</dbReference>
<dbReference type="InterPro" id="IPR020630">
    <property type="entry name" value="THF_DH/CycHdrlase_cat_dom"/>
</dbReference>
<dbReference type="InterPro" id="IPR020867">
    <property type="entry name" value="THF_DH/CycHdrlase_CS"/>
</dbReference>
<dbReference type="InterPro" id="IPR020631">
    <property type="entry name" value="THF_DH/CycHdrlase_NAD-bd_dom"/>
</dbReference>
<dbReference type="NCBIfam" id="NF008058">
    <property type="entry name" value="PRK10792.1"/>
    <property type="match status" value="1"/>
</dbReference>
<dbReference type="NCBIfam" id="NF010783">
    <property type="entry name" value="PRK14186.1"/>
    <property type="match status" value="1"/>
</dbReference>
<dbReference type="PANTHER" id="PTHR48099:SF5">
    <property type="entry name" value="C-1-TETRAHYDROFOLATE SYNTHASE, CYTOPLASMIC"/>
    <property type="match status" value="1"/>
</dbReference>
<dbReference type="PANTHER" id="PTHR48099">
    <property type="entry name" value="C-1-TETRAHYDROFOLATE SYNTHASE, CYTOPLASMIC-RELATED"/>
    <property type="match status" value="1"/>
</dbReference>
<dbReference type="Pfam" id="PF00763">
    <property type="entry name" value="THF_DHG_CYH"/>
    <property type="match status" value="1"/>
</dbReference>
<dbReference type="Pfam" id="PF02882">
    <property type="entry name" value="THF_DHG_CYH_C"/>
    <property type="match status" value="1"/>
</dbReference>
<dbReference type="PRINTS" id="PR00085">
    <property type="entry name" value="THFDHDRGNASE"/>
</dbReference>
<dbReference type="SUPFAM" id="SSF53223">
    <property type="entry name" value="Aminoacid dehydrogenase-like, N-terminal domain"/>
    <property type="match status" value="1"/>
</dbReference>
<dbReference type="SUPFAM" id="SSF51735">
    <property type="entry name" value="NAD(P)-binding Rossmann-fold domains"/>
    <property type="match status" value="1"/>
</dbReference>
<dbReference type="PROSITE" id="PS00767">
    <property type="entry name" value="THF_DHG_CYH_2"/>
    <property type="match status" value="1"/>
</dbReference>
<accession>Q07ZX6</accession>
<name>FOLD_SHEFN</name>
<feature type="chain" id="PRO_0000268493" description="Bifunctional protein FolD">
    <location>
        <begin position="1"/>
        <end position="284"/>
    </location>
</feature>
<feature type="binding site" evidence="1">
    <location>
        <begin position="166"/>
        <end position="168"/>
    </location>
    <ligand>
        <name>NADP(+)</name>
        <dbReference type="ChEBI" id="CHEBI:58349"/>
    </ligand>
</feature>
<feature type="binding site" evidence="1">
    <location>
        <position position="232"/>
    </location>
    <ligand>
        <name>NADP(+)</name>
        <dbReference type="ChEBI" id="CHEBI:58349"/>
    </ligand>
</feature>
<protein>
    <recommendedName>
        <fullName evidence="1">Bifunctional protein FolD</fullName>
    </recommendedName>
    <domain>
        <recommendedName>
            <fullName evidence="1">Methylenetetrahydrofolate dehydrogenase</fullName>
            <ecNumber evidence="1">1.5.1.5</ecNumber>
        </recommendedName>
    </domain>
    <domain>
        <recommendedName>
            <fullName evidence="1">Methenyltetrahydrofolate cyclohydrolase</fullName>
            <ecNumber evidence="1">3.5.4.9</ecNumber>
        </recommendedName>
    </domain>
</protein>
<evidence type="ECO:0000255" key="1">
    <source>
        <dbReference type="HAMAP-Rule" id="MF_01576"/>
    </source>
</evidence>
<comment type="function">
    <text evidence="1">Catalyzes the oxidation of 5,10-methylenetetrahydrofolate to 5,10-methenyltetrahydrofolate and then the hydrolysis of 5,10-methenyltetrahydrofolate to 10-formyltetrahydrofolate.</text>
</comment>
<comment type="catalytic activity">
    <reaction evidence="1">
        <text>(6R)-5,10-methylene-5,6,7,8-tetrahydrofolate + NADP(+) = (6R)-5,10-methenyltetrahydrofolate + NADPH</text>
        <dbReference type="Rhea" id="RHEA:22812"/>
        <dbReference type="ChEBI" id="CHEBI:15636"/>
        <dbReference type="ChEBI" id="CHEBI:57455"/>
        <dbReference type="ChEBI" id="CHEBI:57783"/>
        <dbReference type="ChEBI" id="CHEBI:58349"/>
        <dbReference type="EC" id="1.5.1.5"/>
    </reaction>
</comment>
<comment type="catalytic activity">
    <reaction evidence="1">
        <text>(6R)-5,10-methenyltetrahydrofolate + H2O = (6R)-10-formyltetrahydrofolate + H(+)</text>
        <dbReference type="Rhea" id="RHEA:23700"/>
        <dbReference type="ChEBI" id="CHEBI:15377"/>
        <dbReference type="ChEBI" id="CHEBI:15378"/>
        <dbReference type="ChEBI" id="CHEBI:57455"/>
        <dbReference type="ChEBI" id="CHEBI:195366"/>
        <dbReference type="EC" id="3.5.4.9"/>
    </reaction>
</comment>
<comment type="pathway">
    <text evidence="1">One-carbon metabolism; tetrahydrofolate interconversion.</text>
</comment>
<comment type="subunit">
    <text evidence="1">Homodimer.</text>
</comment>
<comment type="similarity">
    <text evidence="1">Belongs to the tetrahydrofolate dehydrogenase/cyclohydrolase family.</text>
</comment>
<organism>
    <name type="scientific">Shewanella frigidimarina (strain NCIMB 400)</name>
    <dbReference type="NCBI Taxonomy" id="318167"/>
    <lineage>
        <taxon>Bacteria</taxon>
        <taxon>Pseudomonadati</taxon>
        <taxon>Pseudomonadota</taxon>
        <taxon>Gammaproteobacteria</taxon>
        <taxon>Alteromonadales</taxon>
        <taxon>Shewanellaceae</taxon>
        <taxon>Shewanella</taxon>
    </lineage>
</organism>
<proteinExistence type="inferred from homology"/>
<sequence length="284" mass="30428">MTAQIIDGKAIAQSIRTTLKQKVTQRRQAGFRAPGLAVILVGSDAASQVYVGSKRKACEEVGFESQSFDLDTETTEAELLALIDECNANPSIDGILVQLPLPAHIDDSKVIERIRPDKDVDGFHPYNVGRLAQRIPVLRSCTPMGIMTLIKSTGIDTYGLDATVVGASNIVGRPMTLELLLAGCTTTTCHRFTKNLEQKVRQADLLVVAVGKPGFIPGDWIKPGAIVIDVGINRLENGSLVGDVEFNVAAEKAAFITPVPGGVGPMTIASLLENTLYACEQYHS</sequence>
<gene>
    <name evidence="1" type="primary">folD</name>
    <name type="ordered locus">Sfri_2598</name>
</gene>